<keyword id="KW-0004">4Fe-4S</keyword>
<keyword id="KW-0963">Cytoplasm</keyword>
<keyword id="KW-1015">Disulfide bond</keyword>
<keyword id="KW-0408">Iron</keyword>
<keyword id="KW-0411">Iron-sulfur</keyword>
<keyword id="KW-0479">Metal-binding</keyword>
<keyword id="KW-0489">Methyltransferase</keyword>
<keyword id="KW-0698">rRNA processing</keyword>
<keyword id="KW-0949">S-adenosyl-L-methionine</keyword>
<keyword id="KW-0808">Transferase</keyword>
<keyword id="KW-0819">tRNA processing</keyword>
<accession>Q0I3U8</accession>
<dbReference type="EC" id="2.1.1.192" evidence="1"/>
<dbReference type="EMBL" id="CP000436">
    <property type="protein sequence ID" value="ABI25473.1"/>
    <property type="status" value="ALT_INIT"/>
    <property type="molecule type" value="Genomic_DNA"/>
</dbReference>
<dbReference type="SMR" id="Q0I3U8"/>
<dbReference type="KEGG" id="hso:HS_1198"/>
<dbReference type="eggNOG" id="COG0820">
    <property type="taxonomic scope" value="Bacteria"/>
</dbReference>
<dbReference type="HOGENOM" id="CLU_029101_0_0_6"/>
<dbReference type="GO" id="GO:0005737">
    <property type="term" value="C:cytoplasm"/>
    <property type="evidence" value="ECO:0007669"/>
    <property type="project" value="UniProtKB-SubCell"/>
</dbReference>
<dbReference type="GO" id="GO:0051539">
    <property type="term" value="F:4 iron, 4 sulfur cluster binding"/>
    <property type="evidence" value="ECO:0007669"/>
    <property type="project" value="UniProtKB-UniRule"/>
</dbReference>
<dbReference type="GO" id="GO:0046872">
    <property type="term" value="F:metal ion binding"/>
    <property type="evidence" value="ECO:0007669"/>
    <property type="project" value="UniProtKB-KW"/>
</dbReference>
<dbReference type="GO" id="GO:0070040">
    <property type="term" value="F:rRNA (adenine(2503)-C2-)-methyltransferase activity"/>
    <property type="evidence" value="ECO:0007669"/>
    <property type="project" value="UniProtKB-UniRule"/>
</dbReference>
<dbReference type="GO" id="GO:0019843">
    <property type="term" value="F:rRNA binding"/>
    <property type="evidence" value="ECO:0007669"/>
    <property type="project" value="UniProtKB-UniRule"/>
</dbReference>
<dbReference type="GO" id="GO:0002935">
    <property type="term" value="F:tRNA (adenine(37)-C2)-methyltransferase activity"/>
    <property type="evidence" value="ECO:0007669"/>
    <property type="project" value="UniProtKB-UniRule"/>
</dbReference>
<dbReference type="GO" id="GO:0000049">
    <property type="term" value="F:tRNA binding"/>
    <property type="evidence" value="ECO:0007669"/>
    <property type="project" value="UniProtKB-UniRule"/>
</dbReference>
<dbReference type="GO" id="GO:0070475">
    <property type="term" value="P:rRNA base methylation"/>
    <property type="evidence" value="ECO:0007669"/>
    <property type="project" value="UniProtKB-UniRule"/>
</dbReference>
<dbReference type="GO" id="GO:0030488">
    <property type="term" value="P:tRNA methylation"/>
    <property type="evidence" value="ECO:0007669"/>
    <property type="project" value="UniProtKB-UniRule"/>
</dbReference>
<dbReference type="CDD" id="cd01335">
    <property type="entry name" value="Radical_SAM"/>
    <property type="match status" value="1"/>
</dbReference>
<dbReference type="FunFam" id="1.10.150.530:FF:000003">
    <property type="entry name" value="Dual-specificity RNA methyltransferase RlmN"/>
    <property type="match status" value="1"/>
</dbReference>
<dbReference type="FunFam" id="3.20.20.70:FF:000008">
    <property type="entry name" value="Dual-specificity RNA methyltransferase RlmN"/>
    <property type="match status" value="1"/>
</dbReference>
<dbReference type="Gene3D" id="1.10.150.530">
    <property type="match status" value="1"/>
</dbReference>
<dbReference type="Gene3D" id="3.20.20.70">
    <property type="entry name" value="Aldolase class I"/>
    <property type="match status" value="1"/>
</dbReference>
<dbReference type="HAMAP" id="MF_01849">
    <property type="entry name" value="RNA_methyltr_RlmN"/>
    <property type="match status" value="1"/>
</dbReference>
<dbReference type="InterPro" id="IPR013785">
    <property type="entry name" value="Aldolase_TIM"/>
</dbReference>
<dbReference type="InterPro" id="IPR040072">
    <property type="entry name" value="Methyltransferase_A"/>
</dbReference>
<dbReference type="InterPro" id="IPR048641">
    <property type="entry name" value="RlmN_N"/>
</dbReference>
<dbReference type="InterPro" id="IPR027492">
    <property type="entry name" value="RNA_MTrfase_RlmN"/>
</dbReference>
<dbReference type="InterPro" id="IPR004383">
    <property type="entry name" value="rRNA_lsu_MTrfase_RlmN/Cfr"/>
</dbReference>
<dbReference type="InterPro" id="IPR007197">
    <property type="entry name" value="rSAM"/>
</dbReference>
<dbReference type="NCBIfam" id="NF008396">
    <property type="entry name" value="PRK11194.1"/>
    <property type="match status" value="1"/>
</dbReference>
<dbReference type="NCBIfam" id="TIGR00048">
    <property type="entry name" value="rRNA_mod_RlmN"/>
    <property type="match status" value="1"/>
</dbReference>
<dbReference type="PANTHER" id="PTHR30544">
    <property type="entry name" value="23S RRNA METHYLTRANSFERASE"/>
    <property type="match status" value="1"/>
</dbReference>
<dbReference type="PANTHER" id="PTHR30544:SF5">
    <property type="entry name" value="RADICAL SAM CORE DOMAIN-CONTAINING PROTEIN"/>
    <property type="match status" value="1"/>
</dbReference>
<dbReference type="Pfam" id="PF04055">
    <property type="entry name" value="Radical_SAM"/>
    <property type="match status" value="1"/>
</dbReference>
<dbReference type="Pfam" id="PF21016">
    <property type="entry name" value="RlmN_N"/>
    <property type="match status" value="1"/>
</dbReference>
<dbReference type="PIRSF" id="PIRSF006004">
    <property type="entry name" value="CHP00048"/>
    <property type="match status" value="1"/>
</dbReference>
<dbReference type="SFLD" id="SFLDF00275">
    <property type="entry name" value="adenosine_C2_methyltransferase"/>
    <property type="match status" value="1"/>
</dbReference>
<dbReference type="SFLD" id="SFLDS00029">
    <property type="entry name" value="Radical_SAM"/>
    <property type="match status" value="1"/>
</dbReference>
<dbReference type="SUPFAM" id="SSF102114">
    <property type="entry name" value="Radical SAM enzymes"/>
    <property type="match status" value="1"/>
</dbReference>
<dbReference type="PROSITE" id="PS51918">
    <property type="entry name" value="RADICAL_SAM"/>
    <property type="match status" value="1"/>
</dbReference>
<sequence length="372" mass="41838">MSDKINLMNLTRQQMRAFFQELGEKPFRADQLVKWIYHFGEDNFDHMTNINKKLREKLKTVAEIKAPEIAVEQRSADGTIKWAMQVGDQQVETVYIPETDRATLCVSSQVGCALACTFCSTAQQGFNRNLTVSEIIGQVWRASKIIGNFGVTGVRPITNVVMMGMGEPLLNVANVVPAMEIMLDDFAYGLSKRRVTLSTSGVVPALDKLSEMIDVALAISLHAPNDELRNEIVPINKKYNIKMLMESVNRYLNVSNANHGKVTIEYVMLDHINDGTEHAHQLAEVLKNTPCKINLIPWNPFPDAPYAKSSNTRIDRFQKTLMEYGFTVILRKTRGDDIDAACGQLAGDVIDRTKRTAQKKRFGKEIGTHQIY</sequence>
<reference key="1">
    <citation type="journal article" date="2007" name="J. Bacteriol.">
        <title>Complete genome sequence of Haemophilus somnus (Histophilus somni) strain 129Pt and comparison to Haemophilus ducreyi 35000HP and Haemophilus influenzae Rd.</title>
        <authorList>
            <person name="Challacombe J.F."/>
            <person name="Duncan A.J."/>
            <person name="Brettin T.S."/>
            <person name="Bruce D."/>
            <person name="Chertkov O."/>
            <person name="Detter J.C."/>
            <person name="Han C.S."/>
            <person name="Misra M."/>
            <person name="Richardson P."/>
            <person name="Tapia R."/>
            <person name="Thayer N."/>
            <person name="Xie G."/>
            <person name="Inzana T.J."/>
        </authorList>
    </citation>
    <scope>NUCLEOTIDE SEQUENCE [LARGE SCALE GENOMIC DNA]</scope>
    <source>
        <strain>129Pt</strain>
    </source>
</reference>
<organism>
    <name type="scientific">Histophilus somni (strain 129Pt)</name>
    <name type="common">Haemophilus somnus</name>
    <dbReference type="NCBI Taxonomy" id="205914"/>
    <lineage>
        <taxon>Bacteria</taxon>
        <taxon>Pseudomonadati</taxon>
        <taxon>Pseudomonadota</taxon>
        <taxon>Gammaproteobacteria</taxon>
        <taxon>Pasteurellales</taxon>
        <taxon>Pasteurellaceae</taxon>
        <taxon>Histophilus</taxon>
    </lineage>
</organism>
<proteinExistence type="inferred from homology"/>
<feature type="chain" id="PRO_0000350204" description="Dual-specificity RNA methyltransferase RlmN">
    <location>
        <begin position="1"/>
        <end position="372"/>
    </location>
</feature>
<feature type="domain" description="Radical SAM core" evidence="2">
    <location>
        <begin position="98"/>
        <end position="337"/>
    </location>
</feature>
<feature type="active site" description="Proton acceptor" evidence="1">
    <location>
        <position position="92"/>
    </location>
</feature>
<feature type="active site" description="S-methylcysteine intermediate" evidence="1">
    <location>
        <position position="342"/>
    </location>
</feature>
<feature type="binding site" evidence="1">
    <location>
        <position position="112"/>
    </location>
    <ligand>
        <name>[4Fe-4S] cluster</name>
        <dbReference type="ChEBI" id="CHEBI:49883"/>
        <note>4Fe-4S-S-AdoMet</note>
    </ligand>
</feature>
<feature type="binding site" evidence="1">
    <location>
        <position position="116"/>
    </location>
    <ligand>
        <name>[4Fe-4S] cluster</name>
        <dbReference type="ChEBI" id="CHEBI:49883"/>
        <note>4Fe-4S-S-AdoMet</note>
    </ligand>
</feature>
<feature type="binding site" evidence="1">
    <location>
        <position position="119"/>
    </location>
    <ligand>
        <name>[4Fe-4S] cluster</name>
        <dbReference type="ChEBI" id="CHEBI:49883"/>
        <note>4Fe-4S-S-AdoMet</note>
    </ligand>
</feature>
<feature type="binding site" evidence="1">
    <location>
        <begin position="166"/>
        <end position="167"/>
    </location>
    <ligand>
        <name>S-adenosyl-L-methionine</name>
        <dbReference type="ChEBI" id="CHEBI:59789"/>
    </ligand>
</feature>
<feature type="binding site" evidence="1">
    <location>
        <position position="198"/>
    </location>
    <ligand>
        <name>S-adenosyl-L-methionine</name>
        <dbReference type="ChEBI" id="CHEBI:59789"/>
    </ligand>
</feature>
<feature type="binding site" evidence="1">
    <location>
        <begin position="220"/>
        <end position="222"/>
    </location>
    <ligand>
        <name>S-adenosyl-L-methionine</name>
        <dbReference type="ChEBI" id="CHEBI:59789"/>
    </ligand>
</feature>
<feature type="binding site" evidence="1">
    <location>
        <position position="299"/>
    </location>
    <ligand>
        <name>S-adenosyl-L-methionine</name>
        <dbReference type="ChEBI" id="CHEBI:59789"/>
    </ligand>
</feature>
<feature type="disulfide bond" description="(transient)" evidence="1">
    <location>
        <begin position="105"/>
        <end position="342"/>
    </location>
</feature>
<comment type="function">
    <text evidence="1">Specifically methylates position 2 of adenine 2503 in 23S rRNA and position 2 of adenine 37 in tRNAs. m2A2503 modification seems to play a crucial role in the proofreading step occurring at the peptidyl transferase center and thus would serve to optimize ribosomal fidelity.</text>
</comment>
<comment type="catalytic activity">
    <reaction evidence="1">
        <text>adenosine(2503) in 23S rRNA + 2 reduced [2Fe-2S]-[ferredoxin] + 2 S-adenosyl-L-methionine = 2-methyladenosine(2503) in 23S rRNA + 5'-deoxyadenosine + L-methionine + 2 oxidized [2Fe-2S]-[ferredoxin] + S-adenosyl-L-homocysteine</text>
        <dbReference type="Rhea" id="RHEA:42916"/>
        <dbReference type="Rhea" id="RHEA-COMP:10000"/>
        <dbReference type="Rhea" id="RHEA-COMP:10001"/>
        <dbReference type="Rhea" id="RHEA-COMP:10152"/>
        <dbReference type="Rhea" id="RHEA-COMP:10282"/>
        <dbReference type="ChEBI" id="CHEBI:17319"/>
        <dbReference type="ChEBI" id="CHEBI:33737"/>
        <dbReference type="ChEBI" id="CHEBI:33738"/>
        <dbReference type="ChEBI" id="CHEBI:57844"/>
        <dbReference type="ChEBI" id="CHEBI:57856"/>
        <dbReference type="ChEBI" id="CHEBI:59789"/>
        <dbReference type="ChEBI" id="CHEBI:74411"/>
        <dbReference type="ChEBI" id="CHEBI:74497"/>
        <dbReference type="EC" id="2.1.1.192"/>
    </reaction>
</comment>
<comment type="catalytic activity">
    <reaction evidence="1">
        <text>adenosine(37) in tRNA + 2 reduced [2Fe-2S]-[ferredoxin] + 2 S-adenosyl-L-methionine = 2-methyladenosine(37) in tRNA + 5'-deoxyadenosine + L-methionine + 2 oxidized [2Fe-2S]-[ferredoxin] + S-adenosyl-L-homocysteine</text>
        <dbReference type="Rhea" id="RHEA:43332"/>
        <dbReference type="Rhea" id="RHEA-COMP:10000"/>
        <dbReference type="Rhea" id="RHEA-COMP:10001"/>
        <dbReference type="Rhea" id="RHEA-COMP:10162"/>
        <dbReference type="Rhea" id="RHEA-COMP:10485"/>
        <dbReference type="ChEBI" id="CHEBI:17319"/>
        <dbReference type="ChEBI" id="CHEBI:33737"/>
        <dbReference type="ChEBI" id="CHEBI:33738"/>
        <dbReference type="ChEBI" id="CHEBI:57844"/>
        <dbReference type="ChEBI" id="CHEBI:57856"/>
        <dbReference type="ChEBI" id="CHEBI:59789"/>
        <dbReference type="ChEBI" id="CHEBI:74411"/>
        <dbReference type="ChEBI" id="CHEBI:74497"/>
        <dbReference type="EC" id="2.1.1.192"/>
    </reaction>
</comment>
<comment type="cofactor">
    <cofactor evidence="1">
        <name>[4Fe-4S] cluster</name>
        <dbReference type="ChEBI" id="CHEBI:49883"/>
    </cofactor>
    <text evidence="1">Binds 1 [4Fe-4S] cluster. The cluster is coordinated with 3 cysteines and an exchangeable S-adenosyl-L-methionine.</text>
</comment>
<comment type="subcellular location">
    <subcellularLocation>
        <location evidence="1">Cytoplasm</location>
    </subcellularLocation>
</comment>
<comment type="miscellaneous">
    <text evidence="1">Reaction proceeds by a ping-pong mechanism involving intermediate methylation of a conserved cysteine residue.</text>
</comment>
<comment type="similarity">
    <text evidence="1">Belongs to the radical SAM superfamily. RlmN family.</text>
</comment>
<comment type="sequence caution" evidence="3">
    <conflict type="erroneous initiation">
        <sequence resource="EMBL-CDS" id="ABI25473"/>
    </conflict>
</comment>
<protein>
    <recommendedName>
        <fullName evidence="1">Dual-specificity RNA methyltransferase RlmN</fullName>
        <ecNumber evidence="1">2.1.1.192</ecNumber>
    </recommendedName>
    <alternativeName>
        <fullName evidence="1">23S rRNA (adenine(2503)-C(2))-methyltransferase</fullName>
    </alternativeName>
    <alternativeName>
        <fullName evidence="1">23S rRNA m2A2503 methyltransferase</fullName>
    </alternativeName>
    <alternativeName>
        <fullName evidence="1">Ribosomal RNA large subunit methyltransferase N</fullName>
    </alternativeName>
    <alternativeName>
        <fullName evidence="1">tRNA (adenine(37)-C(2))-methyltransferase</fullName>
    </alternativeName>
    <alternativeName>
        <fullName evidence="1">tRNA m2A37 methyltransferase</fullName>
    </alternativeName>
</protein>
<evidence type="ECO:0000255" key="1">
    <source>
        <dbReference type="HAMAP-Rule" id="MF_01849"/>
    </source>
</evidence>
<evidence type="ECO:0000255" key="2">
    <source>
        <dbReference type="PROSITE-ProRule" id="PRU01266"/>
    </source>
</evidence>
<evidence type="ECO:0000305" key="3"/>
<name>RLMN_HISS1</name>
<gene>
    <name evidence="1" type="primary">rlmN</name>
    <name type="ordered locus">HS_1198</name>
</gene>